<name>CENPO_XENTR</name>
<reference key="1">
    <citation type="submission" date="2006-06" db="EMBL/GenBank/DDBJ databases">
        <authorList>
            <consortium name="Sanger Xenopus tropicalis EST/cDNA project"/>
        </authorList>
    </citation>
    <scope>NUCLEOTIDE SEQUENCE [LARGE SCALE MRNA]</scope>
    <source>
        <tissue>Gastrula</tissue>
    </source>
</reference>
<reference key="2">
    <citation type="submission" date="2005-05" db="EMBL/GenBank/DDBJ databases">
        <authorList>
            <consortium name="NIH - Xenopus Gene Collection (XGC) project"/>
        </authorList>
    </citation>
    <scope>NUCLEOTIDE SEQUENCE [LARGE SCALE MRNA]</scope>
    <source>
        <tissue>Embryo</tissue>
    </source>
</reference>
<gene>
    <name type="primary">cenpo</name>
    <name type="ORF">TGas100d11.1</name>
</gene>
<accession>Q28HU3</accession>
<accession>Q501R3</accession>
<comment type="function">
    <text evidence="1">Probable component of a centromeric complex involved in assembly of kinetochore proteins, mitotic progression and chromosome segregation.</text>
</comment>
<comment type="subcellular location">
    <subcellularLocation>
        <location evidence="1">Nucleus</location>
    </subcellularLocation>
    <subcellularLocation>
        <location evidence="1">Chromosome</location>
        <location evidence="1">Centromere</location>
    </subcellularLocation>
    <text evidence="1">Localizes exclusively in the centromeres.</text>
</comment>
<comment type="similarity">
    <text evidence="3">Belongs to the CENP-O/MCM21 family.</text>
</comment>
<comment type="sequence caution" evidence="3">
    <conflict type="erroneous initiation">
        <sequence resource="EMBL-CDS" id="AAH95911"/>
    </conflict>
</comment>
<evidence type="ECO:0000250" key="1"/>
<evidence type="ECO:0000255" key="2"/>
<evidence type="ECO:0000305" key="3"/>
<proteinExistence type="evidence at transcript level"/>
<organism>
    <name type="scientific">Xenopus tropicalis</name>
    <name type="common">Western clawed frog</name>
    <name type="synonym">Silurana tropicalis</name>
    <dbReference type="NCBI Taxonomy" id="8364"/>
    <lineage>
        <taxon>Eukaryota</taxon>
        <taxon>Metazoa</taxon>
        <taxon>Chordata</taxon>
        <taxon>Craniata</taxon>
        <taxon>Vertebrata</taxon>
        <taxon>Euteleostomi</taxon>
        <taxon>Amphibia</taxon>
        <taxon>Batrachia</taxon>
        <taxon>Anura</taxon>
        <taxon>Pipoidea</taxon>
        <taxon>Pipidae</taxon>
        <taxon>Xenopodinae</taxon>
        <taxon>Xenopus</taxon>
        <taxon>Silurana</taxon>
    </lineage>
</organism>
<dbReference type="EMBL" id="CR760735">
    <property type="protein sequence ID" value="CAJ83414.1"/>
    <property type="molecule type" value="mRNA"/>
</dbReference>
<dbReference type="EMBL" id="BC095911">
    <property type="protein sequence ID" value="AAH95911.1"/>
    <property type="status" value="ALT_INIT"/>
    <property type="molecule type" value="mRNA"/>
</dbReference>
<dbReference type="RefSeq" id="NP_001037907.2">
    <property type="nucleotide sequence ID" value="NM_001044442.3"/>
</dbReference>
<dbReference type="RefSeq" id="NP_001268757.1">
    <property type="nucleotide sequence ID" value="NM_001281828.1"/>
</dbReference>
<dbReference type="RefSeq" id="XP_012819499.2">
    <property type="nucleotide sequence ID" value="XM_012964045.3"/>
</dbReference>
<dbReference type="SMR" id="Q28HU3"/>
<dbReference type="FunCoup" id="Q28HU3">
    <property type="interactions" value="2508"/>
</dbReference>
<dbReference type="STRING" id="8364.ENSXETP00000007486"/>
<dbReference type="PaxDb" id="8364-ENSXETP00000045787"/>
<dbReference type="GeneID" id="733516"/>
<dbReference type="KEGG" id="xtr:733516"/>
<dbReference type="AGR" id="Xenbase:XB-GENE-963144"/>
<dbReference type="CTD" id="79172"/>
<dbReference type="Xenbase" id="XB-GENE-963144">
    <property type="gene designation" value="cenpo"/>
</dbReference>
<dbReference type="eggNOG" id="ENOG502RY72">
    <property type="taxonomic scope" value="Eukaryota"/>
</dbReference>
<dbReference type="InParanoid" id="Q28HU3"/>
<dbReference type="OMA" id="MEWANDG"/>
<dbReference type="OrthoDB" id="10050372at2759"/>
<dbReference type="Reactome" id="R-XTR-141444">
    <property type="pathway name" value="Amplification of signal from unattached kinetochores via a MAD2 inhibitory signal"/>
</dbReference>
<dbReference type="Reactome" id="R-XTR-2467813">
    <property type="pathway name" value="Separation of Sister Chromatids"/>
</dbReference>
<dbReference type="Reactome" id="R-XTR-2500257">
    <property type="pathway name" value="Resolution of Sister Chromatid Cohesion"/>
</dbReference>
<dbReference type="Reactome" id="R-XTR-5663220">
    <property type="pathway name" value="RHO GTPases Activate Formins"/>
</dbReference>
<dbReference type="Reactome" id="R-XTR-606279">
    <property type="pathway name" value="Deposition of new CENPA-containing nucleosomes at the centromere"/>
</dbReference>
<dbReference type="Reactome" id="R-XTR-68877">
    <property type="pathway name" value="Mitotic Prometaphase"/>
</dbReference>
<dbReference type="Reactome" id="R-XTR-9648025">
    <property type="pathway name" value="EML4 and NUDC in mitotic spindle formation"/>
</dbReference>
<dbReference type="Proteomes" id="UP000008143">
    <property type="component" value="Chromosome 5"/>
</dbReference>
<dbReference type="GO" id="GO:0000776">
    <property type="term" value="C:kinetochore"/>
    <property type="evidence" value="ECO:0007669"/>
    <property type="project" value="InterPro"/>
</dbReference>
<dbReference type="GO" id="GO:0005634">
    <property type="term" value="C:nucleus"/>
    <property type="evidence" value="ECO:0007669"/>
    <property type="project" value="UniProtKB-SubCell"/>
</dbReference>
<dbReference type="GO" id="GO:0034508">
    <property type="term" value="P:centromere complex assembly"/>
    <property type="evidence" value="ECO:0007669"/>
    <property type="project" value="InterPro"/>
</dbReference>
<dbReference type="CDD" id="cd23836">
    <property type="entry name" value="DRWD-C_CENP-O"/>
    <property type="match status" value="1"/>
</dbReference>
<dbReference type="CDD" id="cd23835">
    <property type="entry name" value="DRWD-N_CENP-O"/>
    <property type="match status" value="1"/>
</dbReference>
<dbReference type="InterPro" id="IPR018464">
    <property type="entry name" value="CENP-O"/>
</dbReference>
<dbReference type="PANTHER" id="PTHR14582:SF1">
    <property type="entry name" value="CENTROMERE PROTEIN O"/>
    <property type="match status" value="1"/>
</dbReference>
<dbReference type="PANTHER" id="PTHR14582">
    <property type="entry name" value="INNER KINETOCHORE SUBUNIT MAL2"/>
    <property type="match status" value="1"/>
</dbReference>
<dbReference type="Pfam" id="PF09496">
    <property type="entry name" value="CENP-O"/>
    <property type="match status" value="1"/>
</dbReference>
<feature type="chain" id="PRO_0000249505" description="Centromere protein O">
    <location>
        <begin position="1"/>
        <end position="303"/>
    </location>
</feature>
<feature type="coiled-coil region" evidence="2">
    <location>
        <begin position="38"/>
        <end position="77"/>
    </location>
</feature>
<feature type="sequence conflict" description="In Ref. 2; AAH95911." evidence="3" ref="2">
    <original>T</original>
    <variation>S</variation>
    <location>
        <position position="127"/>
    </location>
</feature>
<protein>
    <recommendedName>
        <fullName>Centromere protein O</fullName>
        <shortName>CENP-O</shortName>
    </recommendedName>
</protein>
<sequence length="303" mass="34192">MEQAQSLFREGVLSHLEQLEALSYNLAVKQEKQRQEWAALRKNQELVLELRKKRDELKAKIERHKAEIQAFRGREEAGEDHGSAAGTSQQAMLELCVEELKGMLEMHWLTGISGKRTKKGVCVCISTAFEGAYLDSFHLDIALKPSVGISRHSVPPFIPLEQIAKEHLQTDLKKFLSVLFEHLNAYAGRKYQFQQLQSFPGGFVRDAQQGNSLHTVLTFGYNVRVEKQPFCLRAKLLYGGVTRSLPTEAVITCEDNRPSVQEKISSHSSLFCQNPLHRALECISSEDETLNHSSASLLGTHMF</sequence>
<keyword id="KW-0137">Centromere</keyword>
<keyword id="KW-0158">Chromosome</keyword>
<keyword id="KW-0175">Coiled coil</keyword>
<keyword id="KW-0539">Nucleus</keyword>
<keyword id="KW-1185">Reference proteome</keyword>